<gene>
    <name type="primary">Gfra4</name>
</gene>
<reference key="1">
    <citation type="journal article" date="2000" name="Mol. Cell. Neurosci.">
        <title>Expression and alternative splicing of mouse Gfra4 suggest roles in endocrine cell development.</title>
        <authorList>
            <person name="Lindahl M."/>
            <person name="Timmusk T."/>
            <person name="Rossi J."/>
            <person name="Saarma M."/>
            <person name="Airaksinen M.S."/>
        </authorList>
    </citation>
    <scope>NUCLEOTIDE SEQUENCE [MRNA] (ISOFORMS A1; A2; A3; B1; B2 AND B3)</scope>
    <scope>SUBCELLULAR LOCATION</scope>
    <scope>TISSUE SPECIFICITY</scope>
    <scope>DEVELOPMENTAL STAGE</scope>
    <source>
        <tissue>Thyroid</tissue>
    </source>
</reference>
<reference key="2">
    <citation type="journal article" date="2009" name="PLoS Biol.">
        <title>Lineage-specific biology revealed by a finished genome assembly of the mouse.</title>
        <authorList>
            <person name="Church D.M."/>
            <person name="Goodstadt L."/>
            <person name="Hillier L.W."/>
            <person name="Zody M.C."/>
            <person name="Goldstein S."/>
            <person name="She X."/>
            <person name="Bult C.J."/>
            <person name="Agarwala R."/>
            <person name="Cherry J.L."/>
            <person name="DiCuccio M."/>
            <person name="Hlavina W."/>
            <person name="Kapustin Y."/>
            <person name="Meric P."/>
            <person name="Maglott D."/>
            <person name="Birtle Z."/>
            <person name="Marques A.C."/>
            <person name="Graves T."/>
            <person name="Zhou S."/>
            <person name="Teague B."/>
            <person name="Potamousis K."/>
            <person name="Churas C."/>
            <person name="Place M."/>
            <person name="Herschleb J."/>
            <person name="Runnheim R."/>
            <person name="Forrest D."/>
            <person name="Amos-Landgraf J."/>
            <person name="Schwartz D.C."/>
            <person name="Cheng Z."/>
            <person name="Lindblad-Toh K."/>
            <person name="Eichler E.E."/>
            <person name="Ponting C.P."/>
        </authorList>
    </citation>
    <scope>NUCLEOTIDE SEQUENCE [LARGE SCALE GENOMIC DNA]</scope>
    <source>
        <strain>C57BL/6J</strain>
    </source>
</reference>
<organism>
    <name type="scientific">Mus musculus</name>
    <name type="common">Mouse</name>
    <dbReference type="NCBI Taxonomy" id="10090"/>
    <lineage>
        <taxon>Eukaryota</taxon>
        <taxon>Metazoa</taxon>
        <taxon>Chordata</taxon>
        <taxon>Craniata</taxon>
        <taxon>Vertebrata</taxon>
        <taxon>Euteleostomi</taxon>
        <taxon>Mammalia</taxon>
        <taxon>Eutheria</taxon>
        <taxon>Euarchontoglires</taxon>
        <taxon>Glires</taxon>
        <taxon>Rodentia</taxon>
        <taxon>Myomorpha</taxon>
        <taxon>Muroidea</taxon>
        <taxon>Muridae</taxon>
        <taxon>Murinae</taxon>
        <taxon>Mus</taxon>
        <taxon>Mus</taxon>
    </lineage>
</organism>
<dbReference type="EMBL" id="AJ276870">
    <property type="protein sequence ID" value="CAB89690.1"/>
    <property type="molecule type" value="mRNA"/>
</dbReference>
<dbReference type="EMBL" id="AJ276871">
    <property type="protein sequence ID" value="CAB89691.1"/>
    <property type="molecule type" value="mRNA"/>
</dbReference>
<dbReference type="EMBL" id="AJ276872">
    <property type="protein sequence ID" value="CAB89692.1"/>
    <property type="molecule type" value="mRNA"/>
</dbReference>
<dbReference type="EMBL" id="AJ276514">
    <property type="protein sequence ID" value="CAB89687.1"/>
    <property type="molecule type" value="mRNA"/>
</dbReference>
<dbReference type="EMBL" id="AJ276515">
    <property type="protein sequence ID" value="CAB89688.1"/>
    <property type="molecule type" value="mRNA"/>
</dbReference>
<dbReference type="EMBL" id="AJ276516">
    <property type="protein sequence ID" value="CAB89689.1"/>
    <property type="molecule type" value="mRNA"/>
</dbReference>
<dbReference type="EMBL" id="AL833771">
    <property type="status" value="NOT_ANNOTATED_CDS"/>
    <property type="molecule type" value="Genomic_DNA"/>
</dbReference>
<dbReference type="CCDS" id="CCDS16752.1">
    <molecule id="Q9JJT2-5"/>
</dbReference>
<dbReference type="CCDS" id="CCDS50715.1">
    <molecule id="Q9JJT2-2"/>
</dbReference>
<dbReference type="CCDS" id="CCDS59637.1">
    <molecule id="Q9JJT2-4"/>
</dbReference>
<dbReference type="CCDS" id="CCDS59638.1">
    <molecule id="Q9JJT2-1"/>
</dbReference>
<dbReference type="RefSeq" id="NP_001129535.1">
    <molecule id="Q9JJT2-2"/>
    <property type="nucleotide sequence ID" value="NM_001136063.2"/>
</dbReference>
<dbReference type="RefSeq" id="NP_001257930.1">
    <molecule id="Q9JJT2-1"/>
    <property type="nucleotide sequence ID" value="NM_001271001.1"/>
</dbReference>
<dbReference type="RefSeq" id="NP_001257931.1">
    <molecule id="Q9JJT2-4"/>
    <property type="nucleotide sequence ID" value="NM_001271002.1"/>
</dbReference>
<dbReference type="RefSeq" id="NP_064398.1">
    <molecule id="Q9JJT2-5"/>
    <property type="nucleotide sequence ID" value="NM_020014.2"/>
</dbReference>
<dbReference type="SMR" id="Q9JJT2"/>
<dbReference type="FunCoup" id="Q9JJT2">
    <property type="interactions" value="7"/>
</dbReference>
<dbReference type="STRING" id="10090.ENSMUSP00000028787"/>
<dbReference type="GlyCosmos" id="Q9JJT2">
    <property type="glycosylation" value="1 site, No reported glycans"/>
</dbReference>
<dbReference type="GlyGen" id="Q9JJT2">
    <property type="glycosylation" value="1 site"/>
</dbReference>
<dbReference type="PaxDb" id="10090-ENSMUSP00000028787"/>
<dbReference type="Antibodypedia" id="23585">
    <property type="antibodies" value="267 antibodies from 26 providers"/>
</dbReference>
<dbReference type="DNASU" id="14588"/>
<dbReference type="Ensembl" id="ENSMUST00000028787.12">
    <molecule id="Q9JJT2-5"/>
    <property type="protein sequence ID" value="ENSMUSP00000028787.6"/>
    <property type="gene ID" value="ENSMUSG00000027316.16"/>
</dbReference>
<dbReference type="Ensembl" id="ENSMUST00000066958.11">
    <molecule id="Q9JJT2-1"/>
    <property type="protein sequence ID" value="ENSMUSP00000068357.5"/>
    <property type="gene ID" value="ENSMUSG00000027316.16"/>
</dbReference>
<dbReference type="Ensembl" id="ENSMUST00000110234.8">
    <molecule id="Q9JJT2-6"/>
    <property type="protein sequence ID" value="ENSMUSP00000105863.2"/>
    <property type="gene ID" value="ENSMUSG00000027316.16"/>
</dbReference>
<dbReference type="Ensembl" id="ENSMUST00000110235.2">
    <molecule id="Q9JJT2-3"/>
    <property type="protein sequence ID" value="ENSMUSP00000105864.2"/>
    <property type="gene ID" value="ENSMUSG00000027316.16"/>
</dbReference>
<dbReference type="Ensembl" id="ENSMUST00000110239.8">
    <molecule id="Q9JJT2-4"/>
    <property type="protein sequence ID" value="ENSMUSP00000105868.2"/>
    <property type="gene ID" value="ENSMUSG00000027316.16"/>
</dbReference>
<dbReference type="Ensembl" id="ENSMUST00000110240.10">
    <molecule id="Q9JJT2-2"/>
    <property type="protein sequence ID" value="ENSMUSP00000105869.4"/>
    <property type="gene ID" value="ENSMUSG00000027316.16"/>
</dbReference>
<dbReference type="GeneID" id="14588"/>
<dbReference type="KEGG" id="mmu:14588"/>
<dbReference type="UCSC" id="uc008mkd.2">
    <molecule id="Q9JJT2-2"/>
    <property type="organism name" value="mouse"/>
</dbReference>
<dbReference type="UCSC" id="uc008mkg.2">
    <molecule id="Q9JJT2-4"/>
    <property type="organism name" value="mouse"/>
</dbReference>
<dbReference type="UCSC" id="uc008mkh.2">
    <molecule id="Q9JJT2-1"/>
    <property type="organism name" value="mouse"/>
</dbReference>
<dbReference type="UCSC" id="uc008mki.1">
    <molecule id="Q9JJT2-6"/>
    <property type="organism name" value="mouse"/>
</dbReference>
<dbReference type="UCSC" id="uc008mkj.1">
    <molecule id="Q9JJT2-3"/>
    <property type="organism name" value="mouse"/>
</dbReference>
<dbReference type="AGR" id="MGI:1341873"/>
<dbReference type="CTD" id="64096"/>
<dbReference type="MGI" id="MGI:1341873">
    <property type="gene designation" value="Gfra4"/>
</dbReference>
<dbReference type="VEuPathDB" id="HostDB:ENSMUSG00000027316"/>
<dbReference type="eggNOG" id="ENOG502QSGA">
    <property type="taxonomic scope" value="Eukaryota"/>
</dbReference>
<dbReference type="GeneTree" id="ENSGT00940000160491"/>
<dbReference type="HOGENOM" id="CLU_040179_2_0_1"/>
<dbReference type="InParanoid" id="Q9JJT2"/>
<dbReference type="OMA" id="AFDSGWP"/>
<dbReference type="OrthoDB" id="10047040at2759"/>
<dbReference type="PhylomeDB" id="Q9JJT2"/>
<dbReference type="TreeFam" id="TF331647"/>
<dbReference type="Reactome" id="R-MMU-5673001">
    <property type="pathway name" value="RAF/MAP kinase cascade"/>
</dbReference>
<dbReference type="Reactome" id="R-MMU-8853659">
    <property type="pathway name" value="RET signaling"/>
</dbReference>
<dbReference type="BioGRID-ORCS" id="14588">
    <property type="hits" value="2 hits in 78 CRISPR screens"/>
</dbReference>
<dbReference type="PRO" id="PR:Q9JJT2"/>
<dbReference type="Proteomes" id="UP000000589">
    <property type="component" value="Chromosome 2"/>
</dbReference>
<dbReference type="RNAct" id="Q9JJT2">
    <property type="molecule type" value="protein"/>
</dbReference>
<dbReference type="Bgee" id="ENSMUSG00000027316">
    <property type="expression patterns" value="Expressed in urinary bladder and 98 other cell types or tissues"/>
</dbReference>
<dbReference type="ExpressionAtlas" id="Q9JJT2">
    <property type="expression patterns" value="baseline and differential"/>
</dbReference>
<dbReference type="GO" id="GO:0005576">
    <property type="term" value="C:extracellular region"/>
    <property type="evidence" value="ECO:0007669"/>
    <property type="project" value="UniProtKB-SubCell"/>
</dbReference>
<dbReference type="GO" id="GO:0005886">
    <property type="term" value="C:plasma membrane"/>
    <property type="evidence" value="ECO:0007669"/>
    <property type="project" value="UniProtKB-SubCell"/>
</dbReference>
<dbReference type="GO" id="GO:0098552">
    <property type="term" value="C:side of membrane"/>
    <property type="evidence" value="ECO:0007669"/>
    <property type="project" value="UniProtKB-KW"/>
</dbReference>
<dbReference type="GO" id="GO:0015026">
    <property type="term" value="F:coreceptor activity"/>
    <property type="evidence" value="ECO:0000304"/>
    <property type="project" value="MGI"/>
</dbReference>
<dbReference type="GO" id="GO:0016167">
    <property type="term" value="F:glial cell-derived neurotrophic factor receptor activity"/>
    <property type="evidence" value="ECO:0000250"/>
    <property type="project" value="UniProtKB"/>
</dbReference>
<dbReference type="GO" id="GO:0007169">
    <property type="term" value="P:cell surface receptor protein tyrosine kinase signaling pathway"/>
    <property type="evidence" value="ECO:0000304"/>
    <property type="project" value="MGI"/>
</dbReference>
<dbReference type="GO" id="GO:0035860">
    <property type="term" value="P:glial cell-derived neurotrophic factor receptor signaling pathway"/>
    <property type="evidence" value="ECO:0000250"/>
    <property type="project" value="UniProtKB"/>
</dbReference>
<dbReference type="GO" id="GO:0030279">
    <property type="term" value="P:negative regulation of ossification"/>
    <property type="evidence" value="ECO:0000315"/>
    <property type="project" value="MGI"/>
</dbReference>
<dbReference type="GO" id="GO:0001503">
    <property type="term" value="P:ossification"/>
    <property type="evidence" value="ECO:0000315"/>
    <property type="project" value="MGI"/>
</dbReference>
<dbReference type="FunFam" id="1.10.220.110:FF:000001">
    <property type="entry name" value="GDNF family receptor alpha"/>
    <property type="match status" value="1"/>
</dbReference>
<dbReference type="Gene3D" id="1.10.220.110">
    <property type="entry name" value="GDNF binding domain"/>
    <property type="match status" value="1"/>
</dbReference>
<dbReference type="InterPro" id="IPR016017">
    <property type="entry name" value="GDNF/GAS1"/>
</dbReference>
<dbReference type="InterPro" id="IPR037193">
    <property type="entry name" value="GDNF_alpha"/>
</dbReference>
<dbReference type="InterPro" id="IPR003438">
    <property type="entry name" value="GDNF_rcpt"/>
</dbReference>
<dbReference type="PANTHER" id="PTHR10269:SF2">
    <property type="entry name" value="GDNF FAMILY RECEPTOR ALPHA-4"/>
    <property type="match status" value="1"/>
</dbReference>
<dbReference type="PANTHER" id="PTHR10269">
    <property type="entry name" value="GDNF RECEPTOR ALPHA"/>
    <property type="match status" value="1"/>
</dbReference>
<dbReference type="Pfam" id="PF02351">
    <property type="entry name" value="GDNF"/>
    <property type="match status" value="2"/>
</dbReference>
<dbReference type="PRINTS" id="PR01316">
    <property type="entry name" value="GDNFRECEPTOR"/>
</dbReference>
<dbReference type="SMART" id="SM00907">
    <property type="entry name" value="GDNF"/>
    <property type="match status" value="2"/>
</dbReference>
<dbReference type="SUPFAM" id="SSF110035">
    <property type="entry name" value="GDNF receptor-like"/>
    <property type="match status" value="1"/>
</dbReference>
<proteinExistence type="evidence at transcript level"/>
<accession>Q9JJT2</accession>
<accession>A2AP44</accession>
<accession>A2AP46</accession>
<accession>A2AP47</accession>
<accession>A2AP49</accession>
<accession>Q9JJT3</accession>
<accession>Q9JJT4</accession>
<accession>Q9JJT6</accession>
<accession>Q9JJT7</accession>
<accession>Q9JJT8</accession>
<evidence type="ECO:0000250" key="1">
    <source>
        <dbReference type="UniProtKB" id="Q9GZZ7"/>
    </source>
</evidence>
<evidence type="ECO:0000255" key="2"/>
<evidence type="ECO:0000269" key="3">
    <source>
    </source>
</evidence>
<evidence type="ECO:0000303" key="4">
    <source>
    </source>
</evidence>
<evidence type="ECO:0000305" key="5"/>
<evidence type="ECO:0000305" key="6">
    <source>
    </source>
</evidence>
<name>GFRA4_MOUSE</name>
<feature type="signal peptide" evidence="2">
    <location>
        <begin position="1"/>
        <end position="23"/>
    </location>
</feature>
<feature type="chain" id="PRO_0000010795" description="GDNF family receptor alpha-4">
    <location>
        <begin position="24"/>
        <end position="237"/>
    </location>
</feature>
<feature type="propeptide" id="PRO_0000010796" description="Removed in mature form" evidence="2">
    <location>
        <begin position="238"/>
        <end position="260"/>
    </location>
</feature>
<feature type="lipid moiety-binding region" description="GPI-anchor amidated threonine" evidence="2">
    <location>
        <position position="237"/>
    </location>
</feature>
<feature type="glycosylation site" description="N-linked (GlcNAc...) asparagine" evidence="2">
    <location>
        <position position="184"/>
    </location>
</feature>
<feature type="splice variant" id="VSP_007226" description="In isoform b1, isoform b2 and isoform b3." evidence="4">
    <original>MAHCMESALLLLLLLGS</original>
    <variation>MLRRAHLMDERPGQAIFLGLGSQRGS</variation>
    <location>
        <begin position="1"/>
        <end position="17"/>
    </location>
</feature>
<feature type="splice variant" id="VSP_007228" description="In isoform a3 and isoform b3." evidence="4">
    <original>PRLLAFQASCAPAPGSRDRCPEEGGPRCLRVYAGLIGTVVTPNYLDNVSARVA</original>
    <variation>CVRAGRAGPLTRVRARAGPVSLPSRPHALPRPAPATAARRRGARVVCASTQAS</variation>
    <location>
        <begin position="138"/>
        <end position="190"/>
    </location>
</feature>
<feature type="splice variant" id="VSP_007229" description="In isoform a3 and isoform b3." evidence="4">
    <location>
        <begin position="191"/>
        <end position="260"/>
    </location>
</feature>
<feature type="splice variant" id="VSP_007227" description="In isoform a2 and isoform b2." evidence="4">
    <original>VSWLYALTALALQALL</original>
    <variation>ARHEWPEKSWRQKQSLFCPNAQGVLAVCTHCPGSPGPALIRNMNRGRHS</variation>
    <location>
        <begin position="245"/>
        <end position="260"/>
    </location>
</feature>
<protein>
    <recommendedName>
        <fullName>GDNF family receptor alpha-4</fullName>
        <shortName>GDNF receptor alpha-4</shortName>
        <shortName>GDNFR-alpha-4</shortName>
        <shortName>GFR-alpha-4</shortName>
    </recommendedName>
    <alternativeName>
        <fullName>Persephin receptor</fullName>
    </alternativeName>
</protein>
<sequence length="260" mass="27990">MAHCMESALLLLLLLGSASFTDGNRCVDAAEACTADERCQQLRSEYVARCLGRAAPGGRPGPGGCVRSRCRRALRRFFARGPPALTHALLFCGCEGSACAERRRQTFAPACAFSGPGLVPPSCLEPLERCERSRLCRPRLLAFQASCAPAPGSRDRCPEEGGPRCLRVYAGLIGTVVTPNYLDNVSARVAPWCGCAASGNRREECEAFRKLFTRNPCLDGAIQAFDSLQPSVLQDQTAGCCFPRVSWLYALTALALQALL</sequence>
<keyword id="KW-0025">Alternative splicing</keyword>
<keyword id="KW-1003">Cell membrane</keyword>
<keyword id="KW-0325">Glycoprotein</keyword>
<keyword id="KW-0336">GPI-anchor</keyword>
<keyword id="KW-0449">Lipoprotein</keyword>
<keyword id="KW-0472">Membrane</keyword>
<keyword id="KW-0675">Receptor</keyword>
<keyword id="KW-1185">Reference proteome</keyword>
<keyword id="KW-0964">Secreted</keyword>
<keyword id="KW-0732">Signal</keyword>
<comment type="function">
    <text evidence="1">Receptor for persephin (PSPN), a growth factor that exhibits neurotrophic activity on mesencephalic dopaminergic and motor neurons. Acts by binding to its coreceptor, GFRA4, leading to autophosphorylation and activation of the RET receptor. May be important in C-cell development and, in the postnatal development of the adrenal medulla.</text>
</comment>
<comment type="subunit">
    <text evidence="1">Interacts with ARTN ligand and RET: forms a 2:2:2 ternary complex composed of ARTN ligand, GFRA3 and RET receptor. Interacts with SORL1.</text>
</comment>
<comment type="subcellular location">
    <molecule>Isoform a1</molecule>
    <subcellularLocation>
        <location evidence="6">Cell membrane</location>
        <topology evidence="1">Lipid-anchor</topology>
        <topology evidence="1">GPI-anchor</topology>
    </subcellularLocation>
</comment>
<comment type="subcellular location">
    <molecule>Isoform b1</molecule>
    <subcellularLocation>
        <location evidence="6">Cell membrane</location>
        <topology evidence="1">Lipid-anchor</topology>
        <topology evidence="1">GPI-anchor</topology>
    </subcellularLocation>
</comment>
<comment type="subcellular location">
    <molecule>Isoform a3</molecule>
    <subcellularLocation>
        <location evidence="6">Secreted</location>
    </subcellularLocation>
</comment>
<comment type="subcellular location">
    <molecule>Isoform b3</molecule>
    <subcellularLocation>
        <location evidence="6">Secreted</location>
    </subcellularLocation>
</comment>
<comment type="alternative products">
    <event type="alternative splicing"/>
    <isoform>
        <id>Q9JJT2-1</id>
        <name>a1</name>
        <sequence type="displayed"/>
    </isoform>
    <isoform>
        <id>Q9JJT2-2</id>
        <name>a2</name>
        <sequence type="described" ref="VSP_007227"/>
    </isoform>
    <isoform>
        <id>Q9JJT2-3</id>
        <name>a3</name>
        <sequence type="described" ref="VSP_007228 VSP_007229"/>
    </isoform>
    <isoform>
        <id>Q9JJT2-4</id>
        <name>b1</name>
        <sequence type="described" ref="VSP_007226"/>
    </isoform>
    <isoform>
        <id>Q9JJT2-5</id>
        <name>b2</name>
        <sequence type="described" ref="VSP_007226 VSP_007227"/>
    </isoform>
    <isoform>
        <id>Q9JJT2-6</id>
        <name>b3</name>
        <sequence type="described" ref="VSP_007226 VSP_007228 VSP_007229"/>
    </isoform>
    <text>Additional isoforms seem to exist. Tissue-specific and, developmentally regulated splicing.</text>
</comment>
<comment type="tissue specificity">
    <text evidence="3">Expressed in many tissues including adrenal medulla, brain neurons, with highest levels in the cerebral cortex and hippocampus. Moderate levels found in the gut circular muscle and myenteric ganglia as well as in other peripheral ganglia, including the sensory dorsal root and trigeminal as well as superior cervical and sympathetic chain ganglia. Isoform a1, isoform a2, isoform b1 and isoform b2 are exclusively found in the thyroid, parthyroid and pituitary glands.</text>
</comment>
<comment type="developmental stage">
    <text evidence="3">Expressed in several tissues at different embryonic and postnatal stages such as the condensing mesenchyme of developing bones and developing nervous system. Expressed in the developing pituitary gland from 16 dpc and in developing thyroid C-cells from 14 dpc. In the ventral spinal cord, levels decline before birth. In the parathyroid, levels first detected in 3- to 6-week-old mice with high expression. In the adrenal medulla, expressed only in newborn, postnatal (P08) and adult mice. Isoform a1 and isoform b1 are prefentially expressed in 3-week-old thyroid, isoform a2 and isoform b2 in newborn and 6-week-old thyroid glands as well as in postnatal adrenal and pituitary glands.</text>
</comment>
<comment type="miscellaneous">
    <molecule>Isoform b1</molecule>
    <text evidence="5">Alternative N-terminal. Probably non-functional.</text>
</comment>
<comment type="miscellaneous">
    <molecule>Isoform b2</molecule>
    <text evidence="5">Alternative N-terminal. Probably non-functional.</text>
</comment>
<comment type="miscellaneous">
    <molecule>Isoform b3</molecule>
    <text evidence="5">Alternative N-terminal. Probably non-functional.</text>
</comment>
<comment type="similarity">
    <text evidence="5">Belongs to the GDNFR family.</text>
</comment>